<keyword id="KW-0378">Hydrolase</keyword>
<keyword id="KW-0659">Purine metabolism</keyword>
<keyword id="KW-1185">Reference proteome</keyword>
<proteinExistence type="inferred from homology"/>
<evidence type="ECO:0000250" key="1"/>
<evidence type="ECO:0000305" key="2"/>
<gene>
    <name type="ordered locus">DR_1161</name>
</gene>
<reference key="1">
    <citation type="journal article" date="1999" name="Science">
        <title>Genome sequence of the radioresistant bacterium Deinococcus radiodurans R1.</title>
        <authorList>
            <person name="White O."/>
            <person name="Eisen J.A."/>
            <person name="Heidelberg J.F."/>
            <person name="Hickey E.K."/>
            <person name="Peterson J.D."/>
            <person name="Dodson R.J."/>
            <person name="Haft D.H."/>
            <person name="Gwinn M.L."/>
            <person name="Nelson W.C."/>
            <person name="Richardson D.L."/>
            <person name="Moffat K.S."/>
            <person name="Qin H."/>
            <person name="Jiang L."/>
            <person name="Pamphile W."/>
            <person name="Crosby M."/>
            <person name="Shen M."/>
            <person name="Vamathevan J.J."/>
            <person name="Lam P."/>
            <person name="McDonald L.A."/>
            <person name="Utterback T.R."/>
            <person name="Zalewski C."/>
            <person name="Makarova K.S."/>
            <person name="Aravind L."/>
            <person name="Daly M.J."/>
            <person name="Minton K.W."/>
            <person name="Fleischmann R.D."/>
            <person name="Ketchum K.A."/>
            <person name="Nelson K.E."/>
            <person name="Salzberg S.L."/>
            <person name="Smith H.O."/>
            <person name="Venter J.C."/>
            <person name="Fraser C.M."/>
        </authorList>
    </citation>
    <scope>NUCLEOTIDE SEQUENCE [LARGE SCALE GENOMIC DNA]</scope>
    <source>
        <strain>ATCC 13939 / DSM 20539 / JCM 16871 / CCUG 27074 / LMG 4051 / NBRC 15346 / NCIMB 9279 / VKM B-1422 / R1</strain>
    </source>
</reference>
<dbReference type="EC" id="3.5.2.17"/>
<dbReference type="EMBL" id="AE000513">
    <property type="protein sequence ID" value="AAF10734.1"/>
    <property type="molecule type" value="Genomic_DNA"/>
</dbReference>
<dbReference type="PIR" id="D75430">
    <property type="entry name" value="D75430"/>
</dbReference>
<dbReference type="RefSeq" id="NP_294885.1">
    <property type="nucleotide sequence ID" value="NC_001263.1"/>
</dbReference>
<dbReference type="RefSeq" id="WP_010887804.1">
    <property type="nucleotide sequence ID" value="NC_001263.1"/>
</dbReference>
<dbReference type="SMR" id="Q9RV69"/>
<dbReference type="FunCoup" id="Q9RV69">
    <property type="interactions" value="126"/>
</dbReference>
<dbReference type="STRING" id="243230.DR_1161"/>
<dbReference type="PaxDb" id="243230-DR_1161"/>
<dbReference type="EnsemblBacteria" id="AAF10734">
    <property type="protein sequence ID" value="AAF10734"/>
    <property type="gene ID" value="DR_1161"/>
</dbReference>
<dbReference type="GeneID" id="69517408"/>
<dbReference type="KEGG" id="dra:DR_1161"/>
<dbReference type="PATRIC" id="fig|243230.17.peg.1359"/>
<dbReference type="eggNOG" id="COG2351">
    <property type="taxonomic scope" value="Bacteria"/>
</dbReference>
<dbReference type="HOGENOM" id="CLU_115536_1_1_0"/>
<dbReference type="InParanoid" id="Q9RV69"/>
<dbReference type="OrthoDB" id="9792386at2"/>
<dbReference type="UniPathway" id="UPA00394">
    <property type="reaction ID" value="UER00651"/>
</dbReference>
<dbReference type="Proteomes" id="UP000002524">
    <property type="component" value="Chromosome 1"/>
</dbReference>
<dbReference type="GO" id="GO:0033971">
    <property type="term" value="F:hydroxyisourate hydrolase activity"/>
    <property type="evidence" value="ECO:0007669"/>
    <property type="project" value="UniProtKB-EC"/>
</dbReference>
<dbReference type="GO" id="GO:0006144">
    <property type="term" value="P:purine nucleobase metabolic process"/>
    <property type="evidence" value="ECO:0000318"/>
    <property type="project" value="GO_Central"/>
</dbReference>
<dbReference type="GO" id="GO:0019628">
    <property type="term" value="P:urate catabolic process"/>
    <property type="evidence" value="ECO:0007669"/>
    <property type="project" value="UniProtKB-UniPathway"/>
</dbReference>
<dbReference type="CDD" id="cd05822">
    <property type="entry name" value="TLP_HIUase"/>
    <property type="match status" value="1"/>
</dbReference>
<dbReference type="FunFam" id="2.60.40.180:FF:000005">
    <property type="entry name" value="5-hydroxyisourate hydrolase"/>
    <property type="match status" value="1"/>
</dbReference>
<dbReference type="Gene3D" id="2.60.40.180">
    <property type="entry name" value="Transthyretin/hydroxyisourate hydrolase domain"/>
    <property type="match status" value="1"/>
</dbReference>
<dbReference type="InterPro" id="IPR014306">
    <property type="entry name" value="Hydroxyisourate_hydrolase"/>
</dbReference>
<dbReference type="InterPro" id="IPR023418">
    <property type="entry name" value="Thyroxine_BS"/>
</dbReference>
<dbReference type="InterPro" id="IPR000895">
    <property type="entry name" value="Transthyretin/HIU_hydrolase"/>
</dbReference>
<dbReference type="InterPro" id="IPR023416">
    <property type="entry name" value="Transthyretin/HIU_hydrolase_d"/>
</dbReference>
<dbReference type="InterPro" id="IPR036817">
    <property type="entry name" value="Transthyretin/HIU_hydrolase_sf"/>
</dbReference>
<dbReference type="InterPro" id="IPR023419">
    <property type="entry name" value="Transthyretin_CS"/>
</dbReference>
<dbReference type="NCBIfam" id="TIGR02962">
    <property type="entry name" value="hdxy_isourate"/>
    <property type="match status" value="1"/>
</dbReference>
<dbReference type="PANTHER" id="PTHR10395:SF7">
    <property type="entry name" value="5-HYDROXYISOURATE HYDROLASE"/>
    <property type="match status" value="1"/>
</dbReference>
<dbReference type="PANTHER" id="PTHR10395">
    <property type="entry name" value="URICASE AND TRANSTHYRETIN-RELATED"/>
    <property type="match status" value="1"/>
</dbReference>
<dbReference type="Pfam" id="PF00576">
    <property type="entry name" value="Transthyretin"/>
    <property type="match status" value="1"/>
</dbReference>
<dbReference type="PRINTS" id="PR00189">
    <property type="entry name" value="TRNSTHYRETIN"/>
</dbReference>
<dbReference type="SUPFAM" id="SSF49472">
    <property type="entry name" value="Transthyretin (synonym: prealbumin)"/>
    <property type="match status" value="1"/>
</dbReference>
<dbReference type="PROSITE" id="PS00768">
    <property type="entry name" value="TRANSTHYRETIN_1"/>
    <property type="match status" value="1"/>
</dbReference>
<dbReference type="PROSITE" id="PS00769">
    <property type="entry name" value="TRANSTHYRETIN_2"/>
    <property type="match status" value="1"/>
</dbReference>
<name>HIUH_DEIRA</name>
<accession>Q9RV69</accession>
<protein>
    <recommendedName>
        <fullName>5-hydroxyisourate hydrolase</fullName>
        <shortName>HIU hydrolase</shortName>
        <shortName>HIUHase</shortName>
        <ecNumber>3.5.2.17</ecNumber>
    </recommendedName>
</protein>
<sequence length="119" mass="12868">MSGHPGLTTHVLDTARGKPAAGVRVQLCRVTGDTRTPVTEAVTNSDGRTDAPLIERGSLKQGTYELTFHVADYFKGFVAAADPPFLDVVTLRFTVGDTSGHYHVPLVMTPWSYSTYRGS</sequence>
<feature type="chain" id="PRO_0000050612" description="5-hydroxyisourate hydrolase">
    <location>
        <begin position="1"/>
        <end position="119"/>
    </location>
</feature>
<feature type="binding site" evidence="1">
    <location>
        <position position="10"/>
    </location>
    <ligand>
        <name>substrate</name>
    </ligand>
</feature>
<feature type="binding site" evidence="1">
    <location>
        <position position="48"/>
    </location>
    <ligand>
        <name>substrate</name>
    </ligand>
</feature>
<feature type="binding site" evidence="1">
    <location>
        <position position="116"/>
    </location>
    <ligand>
        <name>substrate</name>
    </ligand>
</feature>
<comment type="function">
    <text evidence="1">Catalyzes the hydrolysis of 5-hydroxyisourate (HIU) to 2-oxo-4-hydroxy-4-carboxy-5-ureidoimidazoline (OHCU).</text>
</comment>
<comment type="catalytic activity">
    <reaction>
        <text>5-hydroxyisourate + H2O = 5-hydroxy-2-oxo-4-ureido-2,5-dihydro-1H-imidazole-5-carboxylate + H(+)</text>
        <dbReference type="Rhea" id="RHEA:23736"/>
        <dbReference type="ChEBI" id="CHEBI:15377"/>
        <dbReference type="ChEBI" id="CHEBI:15378"/>
        <dbReference type="ChEBI" id="CHEBI:18072"/>
        <dbReference type="ChEBI" id="CHEBI:58639"/>
        <dbReference type="EC" id="3.5.2.17"/>
    </reaction>
</comment>
<comment type="pathway">
    <text>Purine metabolism; urate degradation; (S)-allantoin from urate: step 2/3.</text>
</comment>
<comment type="subunit">
    <text evidence="1">Homotetramer.</text>
</comment>
<comment type="miscellaneous">
    <text>HIU hydrolysis also occurs spontaneously, but more slowly.</text>
</comment>
<comment type="similarity">
    <text evidence="2">Belongs to the transthyretin family. 5-hydroxyisourate hydrolase subfamily.</text>
</comment>
<organism>
    <name type="scientific">Deinococcus radiodurans (strain ATCC 13939 / DSM 20539 / JCM 16871 / CCUG 27074 / LMG 4051 / NBRC 15346 / NCIMB 9279 / VKM B-1422 / R1)</name>
    <dbReference type="NCBI Taxonomy" id="243230"/>
    <lineage>
        <taxon>Bacteria</taxon>
        <taxon>Thermotogati</taxon>
        <taxon>Deinococcota</taxon>
        <taxon>Deinococci</taxon>
        <taxon>Deinococcales</taxon>
        <taxon>Deinococcaceae</taxon>
        <taxon>Deinococcus</taxon>
    </lineage>
</organism>